<reference key="1">
    <citation type="journal article" date="2003" name="Mol. Microbiol.">
        <title>Genome-based analysis of virulence genes in a non-biofilm-forming Staphylococcus epidermidis strain (ATCC 12228).</title>
        <authorList>
            <person name="Zhang Y.-Q."/>
            <person name="Ren S.-X."/>
            <person name="Li H.-L."/>
            <person name="Wang Y.-X."/>
            <person name="Fu G."/>
            <person name="Yang J."/>
            <person name="Qin Z.-Q."/>
            <person name="Miao Y.-G."/>
            <person name="Wang W.-Y."/>
            <person name="Chen R.-S."/>
            <person name="Shen Y."/>
            <person name="Chen Z."/>
            <person name="Yuan Z.-H."/>
            <person name="Zhao G.-P."/>
            <person name="Qu D."/>
            <person name="Danchin A."/>
            <person name="Wen Y.-M."/>
        </authorList>
    </citation>
    <scope>NUCLEOTIDE SEQUENCE [LARGE SCALE GENOMIC DNA]</scope>
    <source>
        <strain>ATCC 12228 / FDA PCI 1200</strain>
    </source>
</reference>
<accession>Q8CPG8</accession>
<evidence type="ECO:0000255" key="1">
    <source>
        <dbReference type="HAMAP-Rule" id="MF_00050"/>
    </source>
</evidence>
<sequence length="292" mass="32511">MAISAKLVKELREKTGAGMMDCKKALTETDGDIDKAIDYLREKGIAKAAKKADRIAAEGLVHVEVKDNEAAIVEINSETDFVARNEGFQELVKEIANHILDSKVETVDALMESKLSSGKTVDERMKEAISTIGEKLSIRRFSIRTKTDNDAFGAYLHMGGRIGVLTVVEGTTDEEAAKDVAMHIAAINPKYVSSEQVSEEEINHEREVLKQQALNEGKPEKIVEKMVEGRLRKYLQEICAVDQNFVKNPDETVEAFLKAKGGKLTDFVRYEVGEGMEKREENFAEEVKGQMK</sequence>
<proteinExistence type="inferred from homology"/>
<feature type="chain" id="PRO_0000161201" description="Elongation factor Ts">
    <location>
        <begin position="1"/>
        <end position="292"/>
    </location>
</feature>
<feature type="region of interest" description="Involved in Mg(2+) ion dislocation from EF-Tu" evidence="1">
    <location>
        <begin position="79"/>
        <end position="82"/>
    </location>
</feature>
<gene>
    <name evidence="1" type="primary">tsf</name>
    <name type="ordered locus">SE_0933</name>
</gene>
<keyword id="KW-0963">Cytoplasm</keyword>
<keyword id="KW-0251">Elongation factor</keyword>
<keyword id="KW-0648">Protein biosynthesis</keyword>
<name>EFTS_STAES</name>
<organism>
    <name type="scientific">Staphylococcus epidermidis (strain ATCC 12228 / FDA PCI 1200)</name>
    <dbReference type="NCBI Taxonomy" id="176280"/>
    <lineage>
        <taxon>Bacteria</taxon>
        <taxon>Bacillati</taxon>
        <taxon>Bacillota</taxon>
        <taxon>Bacilli</taxon>
        <taxon>Bacillales</taxon>
        <taxon>Staphylococcaceae</taxon>
        <taxon>Staphylococcus</taxon>
    </lineage>
</organism>
<comment type="function">
    <text evidence="1">Associates with the EF-Tu.GDP complex and induces the exchange of GDP to GTP. It remains bound to the aminoacyl-tRNA.EF-Tu.GTP complex up to the GTP hydrolysis stage on the ribosome.</text>
</comment>
<comment type="subcellular location">
    <subcellularLocation>
        <location evidence="1">Cytoplasm</location>
    </subcellularLocation>
</comment>
<comment type="similarity">
    <text evidence="1">Belongs to the EF-Ts family.</text>
</comment>
<protein>
    <recommendedName>
        <fullName evidence="1">Elongation factor Ts</fullName>
        <shortName evidence="1">EF-Ts</shortName>
    </recommendedName>
</protein>
<dbReference type="EMBL" id="AE015929">
    <property type="protein sequence ID" value="AAO04530.1"/>
    <property type="molecule type" value="Genomic_DNA"/>
</dbReference>
<dbReference type="RefSeq" id="NP_764488.1">
    <property type="nucleotide sequence ID" value="NC_004461.1"/>
</dbReference>
<dbReference type="RefSeq" id="WP_002439509.1">
    <property type="nucleotide sequence ID" value="NZ_WBME01000001.1"/>
</dbReference>
<dbReference type="SMR" id="Q8CPG8"/>
<dbReference type="GeneID" id="50018931"/>
<dbReference type="KEGG" id="sep:SE_0933"/>
<dbReference type="PATRIC" id="fig|176280.10.peg.908"/>
<dbReference type="eggNOG" id="COG0264">
    <property type="taxonomic scope" value="Bacteria"/>
</dbReference>
<dbReference type="HOGENOM" id="CLU_047155_0_2_9"/>
<dbReference type="OrthoDB" id="9808348at2"/>
<dbReference type="Proteomes" id="UP000001411">
    <property type="component" value="Chromosome"/>
</dbReference>
<dbReference type="GO" id="GO:0005737">
    <property type="term" value="C:cytoplasm"/>
    <property type="evidence" value="ECO:0007669"/>
    <property type="project" value="UniProtKB-SubCell"/>
</dbReference>
<dbReference type="GO" id="GO:0003746">
    <property type="term" value="F:translation elongation factor activity"/>
    <property type="evidence" value="ECO:0007669"/>
    <property type="project" value="UniProtKB-UniRule"/>
</dbReference>
<dbReference type="CDD" id="cd14275">
    <property type="entry name" value="UBA_EF-Ts"/>
    <property type="match status" value="1"/>
</dbReference>
<dbReference type="FunFam" id="1.10.286.20:FF:000003">
    <property type="entry name" value="Elongation factor Ts"/>
    <property type="match status" value="1"/>
</dbReference>
<dbReference type="FunFam" id="1.10.8.10:FF:000001">
    <property type="entry name" value="Elongation factor Ts"/>
    <property type="match status" value="1"/>
</dbReference>
<dbReference type="Gene3D" id="1.10.286.20">
    <property type="match status" value="1"/>
</dbReference>
<dbReference type="Gene3D" id="1.10.8.10">
    <property type="entry name" value="DNA helicase RuvA subunit, C-terminal domain"/>
    <property type="match status" value="1"/>
</dbReference>
<dbReference type="Gene3D" id="3.30.479.20">
    <property type="entry name" value="Elongation factor Ts, dimerisation domain"/>
    <property type="match status" value="2"/>
</dbReference>
<dbReference type="HAMAP" id="MF_00050">
    <property type="entry name" value="EF_Ts"/>
    <property type="match status" value="1"/>
</dbReference>
<dbReference type="InterPro" id="IPR036402">
    <property type="entry name" value="EF-Ts_dimer_sf"/>
</dbReference>
<dbReference type="InterPro" id="IPR001816">
    <property type="entry name" value="Transl_elong_EFTs/EF1B"/>
</dbReference>
<dbReference type="InterPro" id="IPR014039">
    <property type="entry name" value="Transl_elong_EFTs/EF1B_dimer"/>
</dbReference>
<dbReference type="InterPro" id="IPR018101">
    <property type="entry name" value="Transl_elong_Ts_CS"/>
</dbReference>
<dbReference type="InterPro" id="IPR009060">
    <property type="entry name" value="UBA-like_sf"/>
</dbReference>
<dbReference type="NCBIfam" id="TIGR00116">
    <property type="entry name" value="tsf"/>
    <property type="match status" value="1"/>
</dbReference>
<dbReference type="PANTHER" id="PTHR11741">
    <property type="entry name" value="ELONGATION FACTOR TS"/>
    <property type="match status" value="1"/>
</dbReference>
<dbReference type="PANTHER" id="PTHR11741:SF0">
    <property type="entry name" value="ELONGATION FACTOR TS, MITOCHONDRIAL"/>
    <property type="match status" value="1"/>
</dbReference>
<dbReference type="Pfam" id="PF00889">
    <property type="entry name" value="EF_TS"/>
    <property type="match status" value="1"/>
</dbReference>
<dbReference type="SUPFAM" id="SSF54713">
    <property type="entry name" value="Elongation factor Ts (EF-Ts), dimerisation domain"/>
    <property type="match status" value="2"/>
</dbReference>
<dbReference type="SUPFAM" id="SSF46934">
    <property type="entry name" value="UBA-like"/>
    <property type="match status" value="1"/>
</dbReference>
<dbReference type="PROSITE" id="PS01126">
    <property type="entry name" value="EF_TS_1"/>
    <property type="match status" value="1"/>
</dbReference>
<dbReference type="PROSITE" id="PS01127">
    <property type="entry name" value="EF_TS_2"/>
    <property type="match status" value="1"/>
</dbReference>